<reference key="1">
    <citation type="journal article" date="1996" name="Yeast">
        <title>The sequence of 36.8 kb from the left arm of chromosome XIV reveals 24 complete open reading frames: 18 correspond to new genes, one of which encodes a protein similar to the human myotonic dystrophy kinase.</title>
        <authorList>
            <person name="Nasr F."/>
            <person name="Becam A.-M."/>
            <person name="Herbert C.J."/>
        </authorList>
    </citation>
    <scope>NUCLEOTIDE SEQUENCE [GENOMIC DNA]</scope>
    <source>
        <strain>ATCC 96604 / S288c / FY1679</strain>
    </source>
</reference>
<reference key="2">
    <citation type="journal article" date="1997" name="Nature">
        <title>The nucleotide sequence of Saccharomyces cerevisiae chromosome XIV and its evolutionary implications.</title>
        <authorList>
            <person name="Philippsen P."/>
            <person name="Kleine K."/>
            <person name="Poehlmann R."/>
            <person name="Duesterhoeft A."/>
            <person name="Hamberg K."/>
            <person name="Hegemann J.H."/>
            <person name="Obermaier B."/>
            <person name="Urrestarazu L.A."/>
            <person name="Aert R."/>
            <person name="Albermann K."/>
            <person name="Altmann R."/>
            <person name="Andre B."/>
            <person name="Baladron V."/>
            <person name="Ballesta J.P.G."/>
            <person name="Becam A.-M."/>
            <person name="Beinhauer J.D."/>
            <person name="Boskovic J."/>
            <person name="Buitrago M.J."/>
            <person name="Bussereau F."/>
            <person name="Coster F."/>
            <person name="Crouzet M."/>
            <person name="D'Angelo M."/>
            <person name="Dal Pero F."/>
            <person name="De Antoni A."/>
            <person name="del Rey F."/>
            <person name="Doignon F."/>
            <person name="Domdey H."/>
            <person name="Dubois E."/>
            <person name="Fiedler T.A."/>
            <person name="Fleig U."/>
            <person name="Floeth M."/>
            <person name="Fritz C."/>
            <person name="Gaillardin C."/>
            <person name="Garcia-Cantalejo J.M."/>
            <person name="Glansdorff N."/>
            <person name="Goffeau A."/>
            <person name="Gueldener U."/>
            <person name="Herbert C.J."/>
            <person name="Heumann K."/>
            <person name="Heuss-Neitzel D."/>
            <person name="Hilbert H."/>
            <person name="Hinni K."/>
            <person name="Iraqui Houssaini I."/>
            <person name="Jacquet M."/>
            <person name="Jimenez A."/>
            <person name="Jonniaux J.-L."/>
            <person name="Karpfinger-Hartl L."/>
            <person name="Lanfranchi G."/>
            <person name="Lepingle A."/>
            <person name="Levesque H."/>
            <person name="Lyck R."/>
            <person name="Maftahi M."/>
            <person name="Mallet L."/>
            <person name="Maurer C.T.C."/>
            <person name="Messenguy F."/>
            <person name="Mewes H.-W."/>
            <person name="Moestl D."/>
            <person name="Nasr F."/>
            <person name="Nicaud J.-M."/>
            <person name="Niedenthal R.K."/>
            <person name="Pandolfo D."/>
            <person name="Pierard A."/>
            <person name="Piravandi E."/>
            <person name="Planta R.J."/>
            <person name="Pohl T.M."/>
            <person name="Purnelle B."/>
            <person name="Rebischung C."/>
            <person name="Remacha M.A."/>
            <person name="Revuelta J.L."/>
            <person name="Rinke M."/>
            <person name="Saiz J.E."/>
            <person name="Sartorello F."/>
            <person name="Scherens B."/>
            <person name="Sen-Gupta M."/>
            <person name="Soler-Mira A."/>
            <person name="Urbanus J.H.M."/>
            <person name="Valle G."/>
            <person name="Van Dyck L."/>
            <person name="Verhasselt P."/>
            <person name="Vierendeels F."/>
            <person name="Vissers S."/>
            <person name="Voet M."/>
            <person name="Volckaert G."/>
            <person name="Wach A."/>
            <person name="Wambutt R."/>
            <person name="Wedler H."/>
            <person name="Zollner A."/>
            <person name="Hani J."/>
        </authorList>
    </citation>
    <scope>NUCLEOTIDE SEQUENCE [LARGE SCALE GENOMIC DNA]</scope>
    <source>
        <strain>ATCC 204508 / S288c</strain>
    </source>
</reference>
<reference key="3">
    <citation type="journal article" date="2014" name="G3 (Bethesda)">
        <title>The reference genome sequence of Saccharomyces cerevisiae: Then and now.</title>
        <authorList>
            <person name="Engel S.R."/>
            <person name="Dietrich F.S."/>
            <person name="Fisk D.G."/>
            <person name="Binkley G."/>
            <person name="Balakrishnan R."/>
            <person name="Costanzo M.C."/>
            <person name="Dwight S.S."/>
            <person name="Hitz B.C."/>
            <person name="Karra K."/>
            <person name="Nash R.S."/>
            <person name="Weng S."/>
            <person name="Wong E.D."/>
            <person name="Lloyd P."/>
            <person name="Skrzypek M.S."/>
            <person name="Miyasato S.R."/>
            <person name="Simison M."/>
            <person name="Cherry J.M."/>
        </authorList>
    </citation>
    <scope>GENOME REANNOTATION</scope>
    <source>
        <strain>ATCC 204508 / S288c</strain>
    </source>
</reference>
<reference key="4">
    <citation type="journal article" date="2002" name="Mol. Biol. Cell">
        <title>Cell cycle-dependent assembly of a Gin4-septin complex.</title>
        <authorList>
            <person name="Mortensen E.M."/>
            <person name="McDonald H."/>
            <person name="Yates J. III"/>
            <person name="Kellogg D.R."/>
        </authorList>
    </citation>
    <scope>IDENTIFICATION IN THE GIN4 COMPLEX</scope>
    <scope>IDENTIFICATION BY MASS SPECTROMETRY</scope>
</reference>
<reference key="5">
    <citation type="journal article" date="2002" name="Mol. Cell. Biol.">
        <title>Bni5p, a septin-interacting protein, is required for normal septin function and cytokinesis in Saccharomyces cerevisiae.</title>
        <authorList>
            <person name="Lee P.R."/>
            <person name="Song S."/>
            <person name="Ro H.-S."/>
            <person name="Park C.J."/>
            <person name="Lippincott J."/>
            <person name="Li R."/>
            <person name="Pringle J.R."/>
            <person name="De Virgilio C."/>
            <person name="Longtine M.S."/>
            <person name="Lee K.S."/>
        </authorList>
    </citation>
    <scope>FUNCTION</scope>
    <scope>SUBCELLULAR LOCATION</scope>
    <scope>INDUCTION</scope>
    <scope>INTERACTION WITH CDC11 AND CDC12</scope>
</reference>
<reference key="6">
    <citation type="journal article" date="2003" name="Nature">
        <title>Global analysis of protein localization in budding yeast.</title>
        <authorList>
            <person name="Huh W.-K."/>
            <person name="Falvo J.V."/>
            <person name="Gerke L.C."/>
            <person name="Carroll A.S."/>
            <person name="Howson R.W."/>
            <person name="Weissman J.S."/>
            <person name="O'Shea E.K."/>
        </authorList>
    </citation>
    <scope>SUBCELLULAR LOCATION [LARGE SCALE ANALYSIS]</scope>
</reference>
<reference key="7">
    <citation type="journal article" date="2007" name="J. Proteome Res.">
        <title>Large-scale phosphorylation analysis of alpha-factor-arrested Saccharomyces cerevisiae.</title>
        <authorList>
            <person name="Li X."/>
            <person name="Gerber S.A."/>
            <person name="Rudner A.D."/>
            <person name="Beausoleil S.A."/>
            <person name="Haas W."/>
            <person name="Villen J."/>
            <person name="Elias J.E."/>
            <person name="Gygi S.P."/>
        </authorList>
    </citation>
    <scope>PHOSPHORYLATION [LARGE SCALE ANALYSIS] AT THR-257; SER-270; TYR-344; SER-346 AND SER-350</scope>
    <scope>IDENTIFICATION BY MASS SPECTROMETRY [LARGE SCALE ANALYSIS]</scope>
    <source>
        <strain>ADR376</strain>
    </source>
</reference>
<reference key="8">
    <citation type="journal article" date="2007" name="Proc. Natl. Acad. Sci. U.S.A.">
        <title>Analysis of phosphorylation sites on proteins from Saccharomyces cerevisiae by electron transfer dissociation (ETD) mass spectrometry.</title>
        <authorList>
            <person name="Chi A."/>
            <person name="Huttenhower C."/>
            <person name="Geer L.Y."/>
            <person name="Coon J.J."/>
            <person name="Syka J.E.P."/>
            <person name="Bai D.L."/>
            <person name="Shabanowitz J."/>
            <person name="Burke D.J."/>
            <person name="Troyanskaya O.G."/>
            <person name="Hunt D.F."/>
        </authorList>
    </citation>
    <scope>PHOSPHORYLATION [LARGE SCALE ANALYSIS] AT SER-179</scope>
    <scope>IDENTIFICATION BY MASS SPECTROMETRY [LARGE SCALE ANALYSIS]</scope>
</reference>
<reference key="9">
    <citation type="journal article" date="2008" name="Mol. Cell. Proteomics">
        <title>A multidimensional chromatography technology for in-depth phosphoproteome analysis.</title>
        <authorList>
            <person name="Albuquerque C.P."/>
            <person name="Smolka M.B."/>
            <person name="Payne S.H."/>
            <person name="Bafna V."/>
            <person name="Eng J."/>
            <person name="Zhou H."/>
        </authorList>
    </citation>
    <scope>PHOSPHORYLATION [LARGE SCALE ANALYSIS] AT SER-70; SER-194 AND SER-340</scope>
    <scope>IDENTIFICATION BY MASS SPECTROMETRY [LARGE SCALE ANALYSIS]</scope>
</reference>
<reference key="10">
    <citation type="journal article" date="2009" name="Science">
        <title>Global analysis of Cdk1 substrate phosphorylation sites provides insights into evolution.</title>
        <authorList>
            <person name="Holt L.J."/>
            <person name="Tuch B.B."/>
            <person name="Villen J."/>
            <person name="Johnson A.D."/>
            <person name="Gygi S.P."/>
            <person name="Morgan D.O."/>
        </authorList>
    </citation>
    <scope>PHOSPHORYLATION [LARGE SCALE ANALYSIS] AT SER-179; SER-194; THR-257; SER-270; SER-273; THR-274; SER-332; SER-346 AND SER-350</scope>
    <scope>IDENTIFICATION BY MASS SPECTROMETRY [LARGE SCALE ANALYSIS]</scope>
</reference>
<reference key="11">
    <citation type="journal article" date="2012" name="Proc. Natl. Acad. Sci. U.S.A.">
        <title>N-terminal acetylome analyses and functional insights of the N-terminal acetyltransferase NatB.</title>
        <authorList>
            <person name="Van Damme P."/>
            <person name="Lasa M."/>
            <person name="Polevoda B."/>
            <person name="Gazquez C."/>
            <person name="Elosegui-Artola A."/>
            <person name="Kim D.S."/>
            <person name="De Juan-Pardo E."/>
            <person name="Demeyer K."/>
            <person name="Hole K."/>
            <person name="Larrea E."/>
            <person name="Timmerman E."/>
            <person name="Prieto J."/>
            <person name="Arnesen T."/>
            <person name="Sherman F."/>
            <person name="Gevaert K."/>
            <person name="Aldabe R."/>
        </authorList>
    </citation>
    <scope>IDENTIFICATION BY MASS SPECTROMETRY [LARGE SCALE ANALYSIS]</scope>
</reference>
<reference key="12">
    <citation type="journal article" date="2015" name="Genetics">
        <title>The carboxy-terminal tails of septins Cdc11 and Shs1 recruit myosin-II binding factor Bni5 to the bud neck in Saccharomyces cerevisiae.</title>
        <authorList>
            <person name="Finnigan G.C."/>
            <person name="Booth E.A."/>
            <person name="Duvalyan A."/>
            <person name="Liao E.N."/>
            <person name="Thorner J."/>
        </authorList>
    </citation>
    <scope>FUNCTION</scope>
    <scope>SUBCELLULAR LOCATION</scope>
    <scope>INTERACTION WITH CDC11 AND SHS1</scope>
</reference>
<evidence type="ECO:0000256" key="1">
    <source>
        <dbReference type="SAM" id="MobiDB-lite"/>
    </source>
</evidence>
<evidence type="ECO:0000269" key="2">
    <source>
    </source>
</evidence>
<evidence type="ECO:0000269" key="3">
    <source>
    </source>
</evidence>
<evidence type="ECO:0000269" key="4">
    <source>
    </source>
</evidence>
<evidence type="ECO:0000269" key="5">
    <source>
    </source>
</evidence>
<evidence type="ECO:0000303" key="6">
    <source>
    </source>
</evidence>
<evidence type="ECO:0007744" key="7">
    <source>
    </source>
</evidence>
<evidence type="ECO:0007744" key="8">
    <source>
    </source>
</evidence>
<evidence type="ECO:0007744" key="9">
    <source>
    </source>
</evidence>
<evidence type="ECO:0007744" key="10">
    <source>
    </source>
</evidence>
<dbReference type="EMBL" id="X92517">
    <property type="protein sequence ID" value="CAA63273.1"/>
    <property type="molecule type" value="Genomic_DNA"/>
</dbReference>
<dbReference type="EMBL" id="Z71442">
    <property type="protein sequence ID" value="CAA96053.1"/>
    <property type="molecule type" value="Genomic_DNA"/>
</dbReference>
<dbReference type="EMBL" id="BK006947">
    <property type="protein sequence ID" value="DAA10382.1"/>
    <property type="molecule type" value="Genomic_DNA"/>
</dbReference>
<dbReference type="PIR" id="S60961">
    <property type="entry name" value="S60961"/>
</dbReference>
<dbReference type="RefSeq" id="NP_014233.1">
    <property type="nucleotide sequence ID" value="NM_001183004.1"/>
</dbReference>
<dbReference type="SMR" id="P53890"/>
<dbReference type="BioGRID" id="35662">
    <property type="interactions" value="93"/>
</dbReference>
<dbReference type="ComplexPortal" id="CPX-1712">
    <property type="entry name" value="Gin4 serine/threonine kinase complex"/>
</dbReference>
<dbReference type="DIP" id="DIP-4333N"/>
<dbReference type="FunCoup" id="P53890">
    <property type="interactions" value="65"/>
</dbReference>
<dbReference type="IntAct" id="P53890">
    <property type="interactions" value="12"/>
</dbReference>
<dbReference type="MINT" id="P53890"/>
<dbReference type="STRING" id="4932.YNL166C"/>
<dbReference type="GlyGen" id="P53890">
    <property type="glycosylation" value="2 sites, 1 O-linked glycan (2 sites)"/>
</dbReference>
<dbReference type="iPTMnet" id="P53890"/>
<dbReference type="PaxDb" id="4932-YNL166C"/>
<dbReference type="PeptideAtlas" id="P53890"/>
<dbReference type="EnsemblFungi" id="YNL166C_mRNA">
    <property type="protein sequence ID" value="YNL166C"/>
    <property type="gene ID" value="YNL166C"/>
</dbReference>
<dbReference type="GeneID" id="855555"/>
<dbReference type="KEGG" id="sce:YNL166C"/>
<dbReference type="AGR" id="SGD:S000005110"/>
<dbReference type="SGD" id="S000005110">
    <property type="gene designation" value="BNI5"/>
</dbReference>
<dbReference type="VEuPathDB" id="FungiDB:YNL166C"/>
<dbReference type="eggNOG" id="ENOG502S1ET">
    <property type="taxonomic scope" value="Eukaryota"/>
</dbReference>
<dbReference type="HOGENOM" id="CLU_050570_0_0_1"/>
<dbReference type="InParanoid" id="P53890"/>
<dbReference type="OMA" id="NEYNHES"/>
<dbReference type="OrthoDB" id="3993315at2759"/>
<dbReference type="BioCyc" id="YEAST:G3O-33182-MONOMER"/>
<dbReference type="BioGRID-ORCS" id="855555">
    <property type="hits" value="2 hits in 10 CRISPR screens"/>
</dbReference>
<dbReference type="PRO" id="PR:P53890"/>
<dbReference type="Proteomes" id="UP000002311">
    <property type="component" value="Chromosome XIV"/>
</dbReference>
<dbReference type="RNAct" id="P53890">
    <property type="molecule type" value="protein"/>
</dbReference>
<dbReference type="GO" id="GO:0005935">
    <property type="term" value="C:cellular bud neck"/>
    <property type="evidence" value="ECO:0000314"/>
    <property type="project" value="SGD"/>
</dbReference>
<dbReference type="GO" id="GO:0000144">
    <property type="term" value="C:cellular bud neck septin ring"/>
    <property type="evidence" value="ECO:0000314"/>
    <property type="project" value="SGD"/>
</dbReference>
<dbReference type="GO" id="GO:1990317">
    <property type="term" value="C:Gin4 complex"/>
    <property type="evidence" value="ECO:0000353"/>
    <property type="project" value="ComplexPortal"/>
</dbReference>
<dbReference type="GO" id="GO:0032035">
    <property type="term" value="F:myosin II tail binding"/>
    <property type="evidence" value="ECO:0000353"/>
    <property type="project" value="SGD"/>
</dbReference>
<dbReference type="GO" id="GO:0030674">
    <property type="term" value="F:protein-macromolecule adaptor activity"/>
    <property type="evidence" value="ECO:0000316"/>
    <property type="project" value="SGD"/>
</dbReference>
<dbReference type="GO" id="GO:0072741">
    <property type="term" value="P:protein localization to cell division site"/>
    <property type="evidence" value="ECO:0000315"/>
    <property type="project" value="SGD"/>
</dbReference>
<dbReference type="GO" id="GO:0000921">
    <property type="term" value="P:septin ring assembly"/>
    <property type="evidence" value="ECO:0000315"/>
    <property type="project" value="SGD"/>
</dbReference>
<dbReference type="GO" id="GO:0000920">
    <property type="term" value="P:septum digestion after cytokinesis"/>
    <property type="evidence" value="ECO:0000303"/>
    <property type="project" value="ComplexPortal"/>
</dbReference>
<keyword id="KW-0131">Cell cycle</keyword>
<keyword id="KW-0963">Cytoplasm</keyword>
<keyword id="KW-0597">Phosphoprotein</keyword>
<keyword id="KW-1185">Reference proteome</keyword>
<sequence length="448" mass="49694">MGLDQDKIKKRLSQIEIDINQMNQMIDENLQLVEPAEDEAVEDNVKDTGVVDAVKVAETALFSGNDGADSNPGDSAQVEEHKTAQVHIPTENEANKSTDDPSQLSVTQPFIAKEQITHTAIAIGDSYNSFVANSAGNEKAKDSCTENKEDGTVNIDQNRGEADVEIIENNDDEWEDEKSDVEEGRVDKGTEENSEIESFKSPMPQNNTLGGENKLDAELVLDKFSSANKDLDIQPQTIVVGGDNEYNHESSRLADQTPHDDNSENCPNRSGGSTPLDSQTKIFIPKKNSKEDGTNINHFNSDGDGQKKMANFETRRPTNPFRVISVSSNSNSRNGSRKSSLNKYDSPVSSPITSASELGSIAKLEKRHDYLSMKCIKLQKEIDYLNKMNAQGSLSMEDGKRLHRAVVKLQEYLDKKTKEKYEVGVLLSRHLRKQIDRGENGQFWIGTK</sequence>
<gene>
    <name evidence="6" type="primary">BNI5</name>
    <name type="ordered locus">YNL166C</name>
    <name type="ORF">N1706</name>
</gene>
<accession>P53890</accession>
<accession>D6W116</accession>
<proteinExistence type="evidence at protein level"/>
<protein>
    <recommendedName>
        <fullName evidence="6">Bud neck protein 5</fullName>
    </recommendedName>
</protein>
<organism>
    <name type="scientific">Saccharomyces cerevisiae (strain ATCC 204508 / S288c)</name>
    <name type="common">Baker's yeast</name>
    <dbReference type="NCBI Taxonomy" id="559292"/>
    <lineage>
        <taxon>Eukaryota</taxon>
        <taxon>Fungi</taxon>
        <taxon>Dikarya</taxon>
        <taxon>Ascomycota</taxon>
        <taxon>Saccharomycotina</taxon>
        <taxon>Saccharomycetes</taxon>
        <taxon>Saccharomycetales</taxon>
        <taxon>Saccharomycetaceae</taxon>
        <taxon>Saccharomyces</taxon>
    </lineage>
</organism>
<comment type="function">
    <text evidence="3 5">Required for normal septin function and cytokinesis (PubMed:12215547). Its recruitment to the bud neck by CDCd11 and SHS1 ensures efficient localization at the bud neck of MYO1, the type II myosin of the actomyosin contractile ring (PubMed:25971666).</text>
</comment>
<comment type="subunit">
    <text evidence="2 3 5">Component of the GIN4 complex composed of at least BNI5, CDC3, CDC10, CDC11, CDC12, GIN4, NAP1 and SHS1 (PubMed:12058072). Interacts directly with CDC11, CDC12 and SHS1 (PubMed:12215547, PubMed:25971666).</text>
</comment>
<comment type="interaction">
    <interactant intactId="EBI-28997">
        <id>P53890</id>
    </interactant>
    <interactant intactId="EBI-4429">
        <id>P32457</id>
        <label>CDC3</label>
    </interactant>
    <organismsDiffer>false</organismsDiffer>
    <experiments>2</experiments>
</comment>
<comment type="subcellular location">
    <subcellularLocation>
        <location evidence="4">Cytoplasm</location>
    </subcellularLocation>
    <subcellularLocation>
        <location evidence="5">Bud neck</location>
    </subcellularLocation>
    <text>Arrives at the bud site approximately coincident with bud emergence and dissociates from the septin scaffold before cytokinesis.</text>
</comment>
<comment type="induction">
    <text evidence="3">Expression peaks during S phase of the cell cycle.</text>
</comment>
<name>BNI5_YEAST</name>
<feature type="chain" id="PRO_0000203411" description="Bud neck protein 5">
    <location>
        <begin position="1"/>
        <end position="448"/>
    </location>
</feature>
<feature type="region of interest" description="Disordered" evidence="1">
    <location>
        <begin position="63"/>
        <end position="103"/>
    </location>
</feature>
<feature type="region of interest" description="Disordered" evidence="1">
    <location>
        <begin position="171"/>
        <end position="211"/>
    </location>
</feature>
<feature type="region of interest" description="Disordered" evidence="1">
    <location>
        <begin position="242"/>
        <end position="352"/>
    </location>
</feature>
<feature type="compositionally biased region" description="Acidic residues" evidence="1">
    <location>
        <begin position="171"/>
        <end position="180"/>
    </location>
</feature>
<feature type="compositionally biased region" description="Basic and acidic residues" evidence="1">
    <location>
        <begin position="181"/>
        <end position="191"/>
    </location>
</feature>
<feature type="compositionally biased region" description="Basic and acidic residues" evidence="1">
    <location>
        <begin position="245"/>
        <end position="262"/>
    </location>
</feature>
<feature type="compositionally biased region" description="Polar residues" evidence="1">
    <location>
        <begin position="264"/>
        <end position="281"/>
    </location>
</feature>
<feature type="compositionally biased region" description="Low complexity" evidence="1">
    <location>
        <begin position="325"/>
        <end position="343"/>
    </location>
</feature>
<feature type="modified residue" description="Phosphoserine" evidence="9">
    <location>
        <position position="70"/>
    </location>
</feature>
<feature type="modified residue" description="Phosphoserine" evidence="7 10">
    <location>
        <position position="179"/>
    </location>
</feature>
<feature type="modified residue" description="Phosphoserine" evidence="9 10">
    <location>
        <position position="194"/>
    </location>
</feature>
<feature type="modified residue" description="Phosphothreonine" evidence="8 10">
    <location>
        <position position="257"/>
    </location>
</feature>
<feature type="modified residue" description="Phosphoserine" evidence="8 10">
    <location>
        <position position="270"/>
    </location>
</feature>
<feature type="modified residue" description="Phosphoserine" evidence="10">
    <location>
        <position position="273"/>
    </location>
</feature>
<feature type="modified residue" description="Phosphothreonine" evidence="10">
    <location>
        <position position="274"/>
    </location>
</feature>
<feature type="modified residue" description="Phosphoserine" evidence="10">
    <location>
        <position position="332"/>
    </location>
</feature>
<feature type="modified residue" description="Phosphoserine" evidence="9">
    <location>
        <position position="340"/>
    </location>
</feature>
<feature type="modified residue" description="Phosphotyrosine" evidence="8">
    <location>
        <position position="344"/>
    </location>
</feature>
<feature type="modified residue" description="Phosphoserine" evidence="8 10">
    <location>
        <position position="346"/>
    </location>
</feature>
<feature type="modified residue" description="Phosphoserine" evidence="8 10">
    <location>
        <position position="350"/>
    </location>
</feature>